<reference key="1">
    <citation type="journal article" date="2006" name="Proc. Natl. Acad. Sci. U.S.A.">
        <title>Molecular genetic anatomy of inter- and intraserotype variation in the human bacterial pathogen group A Streptococcus.</title>
        <authorList>
            <person name="Beres S.B."/>
            <person name="Richter E.W."/>
            <person name="Nagiec M.J."/>
            <person name="Sumby P."/>
            <person name="Porcella S.F."/>
            <person name="DeLeo F.R."/>
            <person name="Musser J.M."/>
        </authorList>
    </citation>
    <scope>NUCLEOTIDE SEQUENCE [LARGE SCALE GENOMIC DNA]</scope>
    <source>
        <strain>MGAS2096</strain>
    </source>
</reference>
<feature type="chain" id="PRO_1000045907" description="Septation ring formation regulator EzrA">
    <location>
        <begin position="1"/>
        <end position="574"/>
    </location>
</feature>
<feature type="topological domain" description="Extracellular" evidence="1">
    <location>
        <begin position="1"/>
        <end position="7"/>
    </location>
</feature>
<feature type="transmembrane region" description="Helical" evidence="1">
    <location>
        <begin position="8"/>
        <end position="26"/>
    </location>
</feature>
<feature type="topological domain" description="Cytoplasmic" evidence="1">
    <location>
        <begin position="27"/>
        <end position="574"/>
    </location>
</feature>
<feature type="coiled-coil region" evidence="1">
    <location>
        <begin position="102"/>
        <end position="141"/>
    </location>
</feature>
<feature type="coiled-coil region" evidence="1">
    <location>
        <begin position="274"/>
        <end position="350"/>
    </location>
</feature>
<feature type="coiled-coil region" evidence="1">
    <location>
        <begin position="459"/>
        <end position="520"/>
    </location>
</feature>
<dbReference type="EMBL" id="CP000261">
    <property type="protein sequence ID" value="ABF35668.1"/>
    <property type="molecule type" value="Genomic_DNA"/>
</dbReference>
<dbReference type="SMR" id="Q1JCP0"/>
<dbReference type="KEGG" id="spj:MGAS2096_Spy0616"/>
<dbReference type="HOGENOM" id="CLU_034079_2_0_9"/>
<dbReference type="GO" id="GO:0005886">
    <property type="term" value="C:plasma membrane"/>
    <property type="evidence" value="ECO:0007669"/>
    <property type="project" value="UniProtKB-SubCell"/>
</dbReference>
<dbReference type="GO" id="GO:0005940">
    <property type="term" value="C:septin ring"/>
    <property type="evidence" value="ECO:0007669"/>
    <property type="project" value="InterPro"/>
</dbReference>
<dbReference type="GO" id="GO:0000917">
    <property type="term" value="P:division septum assembly"/>
    <property type="evidence" value="ECO:0007669"/>
    <property type="project" value="UniProtKB-KW"/>
</dbReference>
<dbReference type="GO" id="GO:0000921">
    <property type="term" value="P:septin ring assembly"/>
    <property type="evidence" value="ECO:0007669"/>
    <property type="project" value="InterPro"/>
</dbReference>
<dbReference type="HAMAP" id="MF_00728">
    <property type="entry name" value="EzrA"/>
    <property type="match status" value="1"/>
</dbReference>
<dbReference type="InterPro" id="IPR010379">
    <property type="entry name" value="EzrA"/>
</dbReference>
<dbReference type="NCBIfam" id="NF003407">
    <property type="entry name" value="PRK04778.1-1"/>
    <property type="match status" value="1"/>
</dbReference>
<dbReference type="NCBIfam" id="NF003410">
    <property type="entry name" value="PRK04778.1-4"/>
    <property type="match status" value="1"/>
</dbReference>
<dbReference type="Pfam" id="PF06160">
    <property type="entry name" value="EzrA"/>
    <property type="match status" value="1"/>
</dbReference>
<evidence type="ECO:0000255" key="1">
    <source>
        <dbReference type="HAMAP-Rule" id="MF_00728"/>
    </source>
</evidence>
<organism>
    <name type="scientific">Streptococcus pyogenes serotype M12 (strain MGAS2096)</name>
    <dbReference type="NCBI Taxonomy" id="370553"/>
    <lineage>
        <taxon>Bacteria</taxon>
        <taxon>Bacillati</taxon>
        <taxon>Bacillota</taxon>
        <taxon>Bacilli</taxon>
        <taxon>Lactobacillales</taxon>
        <taxon>Streptococcaceae</taxon>
        <taxon>Streptococcus</taxon>
    </lineage>
</organism>
<sequence>MSSGIILLIVAIVLLVIIAYLVGVIIRKRNDSLITSLEERKQALFALPVNDEIEEVKSLHLIGQSQTSFREWNQKWVDLTVNSFADIENHIFEAENLNDTFNFIRAKHEINSVESQLNLVEEDIASIREALNILKEQEEKNSARVTHALDLYEKLQASISENEDNFGSTMPEIDKQMKNIETEFSQFVALNSSGDPVEASEVLDRAEEHTIALGQITEQIPAIVAKLEDDFPDQLDDLETGYRRLLEENYHFPEKNIEARFQEIRESIRANSSELVTLDLDRAREENTHIQERIDSLYEVFEREIAAYKVAAKNSKMLPRYLAHVKRNNEQLKDEIARLSRKYILSETESLTVKAFEKDIKEIEDSTLAVAEQFGLQEKPFSELQVTFERSIKTLTNVESGQMDVFAAVKDIEKIESQARHNLDVYVTQLHMIKRYMEKRHLPGIPQDFLSAFFTTSSQLEALMDELSRGRINIEAVSRLSEVATVAIANLEDLTYQVVQNATLTEQLLQYSNRYRSFEAGVQSSFEHALRLFEVENDYQASFDEISYALETVEPGVTDRFVNSYEKTREHIRF</sequence>
<proteinExistence type="inferred from homology"/>
<keyword id="KW-0131">Cell cycle</keyword>
<keyword id="KW-0132">Cell division</keyword>
<keyword id="KW-1003">Cell membrane</keyword>
<keyword id="KW-0175">Coiled coil</keyword>
<keyword id="KW-0472">Membrane</keyword>
<keyword id="KW-0717">Septation</keyword>
<keyword id="KW-0812">Transmembrane</keyword>
<keyword id="KW-1133">Transmembrane helix</keyword>
<gene>
    <name evidence="1" type="primary">ezrA</name>
    <name type="ordered locus">MGAS2096_Spy0616</name>
</gene>
<name>EZRA_STRPB</name>
<protein>
    <recommendedName>
        <fullName evidence="1">Septation ring formation regulator EzrA</fullName>
    </recommendedName>
</protein>
<accession>Q1JCP0</accession>
<comment type="function">
    <text evidence="1">Negative regulator of FtsZ ring formation; modulates the frequency and position of FtsZ ring formation. Inhibits FtsZ ring formation at polar sites. Interacts either with FtsZ or with one of its binding partners to promote depolymerization.</text>
</comment>
<comment type="subcellular location">
    <subcellularLocation>
        <location evidence="1">Cell membrane</location>
        <topology evidence="1">Single-pass membrane protein</topology>
    </subcellularLocation>
    <text evidence="1">Colocalized with FtsZ to the nascent septal site.</text>
</comment>
<comment type="similarity">
    <text evidence="1">Belongs to the EzrA family.</text>
</comment>